<gene>
    <name type="primary">psaJ</name>
</gene>
<keyword id="KW-0002">3D-structure</keyword>
<keyword id="KW-0150">Chloroplast</keyword>
<keyword id="KW-0472">Membrane</keyword>
<keyword id="KW-0602">Photosynthesis</keyword>
<keyword id="KW-0603">Photosystem I</keyword>
<keyword id="KW-0934">Plastid</keyword>
<keyword id="KW-1185">Reference proteome</keyword>
<keyword id="KW-0793">Thylakoid</keyword>
<keyword id="KW-0812">Transmembrane</keyword>
<keyword id="KW-1133">Transmembrane helix</keyword>
<reference key="1">
    <citation type="journal article" date="2009" name="BMC Evol. Biol.">
        <title>Nucleotide diversity of the Chlamydomonas reinhardtii plastid genome: addressing the mutational-hazard hypothesis.</title>
        <authorList>
            <person name="Smith D.R."/>
            <person name="Lee R.W."/>
        </authorList>
    </citation>
    <scope>NUCLEOTIDE SEQUENCE [LARGE SCALE GENOMIC DNA]</scope>
    <source>
        <strain>CC-503</strain>
    </source>
</reference>
<reference key="2">
    <citation type="journal article" date="2002" name="Plant Cell">
        <title>The Chlamydomonas reinhardtii plastid chromosome: islands of genes in a sea of repeats.</title>
        <authorList>
            <person name="Maul J.E."/>
            <person name="Lilly J.W."/>
            <person name="Cui L."/>
            <person name="dePamphilis C.W."/>
            <person name="Miller W."/>
            <person name="Harris E.H."/>
            <person name="Stern D.B."/>
        </authorList>
    </citation>
    <scope>IDENTIFICATION</scope>
    <scope>COMPLETE PLASTID GENOME</scope>
</reference>
<organism>
    <name type="scientific">Chlamydomonas reinhardtii</name>
    <name type="common">Chlamydomonas smithii</name>
    <dbReference type="NCBI Taxonomy" id="3055"/>
    <lineage>
        <taxon>Eukaryota</taxon>
        <taxon>Viridiplantae</taxon>
        <taxon>Chlorophyta</taxon>
        <taxon>core chlorophytes</taxon>
        <taxon>Chlorophyceae</taxon>
        <taxon>CS clade</taxon>
        <taxon>Chlamydomonadales</taxon>
        <taxon>Chlamydomonadaceae</taxon>
        <taxon>Chlamydomonas</taxon>
    </lineage>
</organism>
<comment type="function">
    <text evidence="1">May help in the organization of the PsaE and PsaF subunits.</text>
</comment>
<comment type="subcellular location">
    <subcellularLocation>
        <location evidence="1">Plastid</location>
        <location evidence="1">Chloroplast thylakoid membrane</location>
        <topology evidence="1">Single-pass membrane protein</topology>
    </subcellularLocation>
</comment>
<comment type="similarity">
    <text evidence="3">Belongs to the PsaJ family.</text>
</comment>
<geneLocation type="chloroplast"/>
<sequence>MKDFTTYLSTAPVIATIWFTFTAGLLIEINRYFPDPLVFSF</sequence>
<accession>P59777</accession>
<accession>B7U1K1</accession>
<feature type="chain" id="PRO_0000207785" description="Photosystem I reaction center subunit IX">
    <location>
        <begin position="1"/>
        <end position="41"/>
    </location>
</feature>
<feature type="transmembrane region" description="Helical" evidence="2">
    <location>
        <begin position="7"/>
        <end position="27"/>
    </location>
</feature>
<feature type="helix" evidence="4">
    <location>
        <begin position="2"/>
        <end position="8"/>
    </location>
</feature>
<feature type="helix" evidence="4">
    <location>
        <begin position="11"/>
        <end position="32"/>
    </location>
</feature>
<name>PSAJ_CHLRE</name>
<dbReference type="EMBL" id="FJ423446">
    <property type="protein sequence ID" value="ACJ50148.1"/>
    <property type="molecule type" value="Genomic_DNA"/>
</dbReference>
<dbReference type="EMBL" id="BK000554">
    <property type="protein sequence ID" value="DAA00961.1"/>
    <property type="molecule type" value="Genomic_DNA"/>
</dbReference>
<dbReference type="RefSeq" id="NP_958417.1">
    <property type="nucleotide sequence ID" value="NC_005353.1"/>
</dbReference>
<dbReference type="PDB" id="6IJJ">
    <property type="method" value="EM"/>
    <property type="resolution" value="2.89 A"/>
    <property type="chains" value="J=1-41"/>
</dbReference>
<dbReference type="PDB" id="6IJO">
    <property type="method" value="EM"/>
    <property type="resolution" value="3.30 A"/>
    <property type="chains" value="J=1-41"/>
</dbReference>
<dbReference type="PDB" id="6JO5">
    <property type="method" value="EM"/>
    <property type="resolution" value="2.90 A"/>
    <property type="chains" value="J=1-41"/>
</dbReference>
<dbReference type="PDB" id="6JO6">
    <property type="method" value="EM"/>
    <property type="resolution" value="2.90 A"/>
    <property type="chains" value="J=1-41"/>
</dbReference>
<dbReference type="PDB" id="7BGI">
    <property type="method" value="EM"/>
    <property type="resolution" value="2.54 A"/>
    <property type="chains" value="J=1-39"/>
</dbReference>
<dbReference type="PDB" id="7BLX">
    <property type="method" value="EM"/>
    <property type="resolution" value="3.15 A"/>
    <property type="chains" value="J=1-39"/>
</dbReference>
<dbReference type="PDB" id="7D0J">
    <property type="method" value="EM"/>
    <property type="resolution" value="3.42 A"/>
    <property type="chains" value="J=1-41"/>
</dbReference>
<dbReference type="PDB" id="7DZ7">
    <property type="method" value="EM"/>
    <property type="resolution" value="2.84 A"/>
    <property type="chains" value="J=1-41"/>
</dbReference>
<dbReference type="PDB" id="7DZ8">
    <property type="method" value="EM"/>
    <property type="resolution" value="3.16 A"/>
    <property type="chains" value="J=1-41"/>
</dbReference>
<dbReference type="PDB" id="7O01">
    <property type="method" value="EM"/>
    <property type="resolution" value="17.10 A"/>
    <property type="chains" value="J/j=1-39"/>
</dbReference>
<dbReference type="PDB" id="7R3K">
    <property type="method" value="EM"/>
    <property type="resolution" value="2.52 A"/>
    <property type="chains" value="J=1-41"/>
</dbReference>
<dbReference type="PDB" id="7WYI">
    <property type="method" value="EM"/>
    <property type="resolution" value="3.90 A"/>
    <property type="chains" value="J=1-41"/>
</dbReference>
<dbReference type="PDB" id="7WZN">
    <property type="method" value="EM"/>
    <property type="resolution" value="4.90 A"/>
    <property type="chains" value="J=1-41"/>
</dbReference>
<dbReference type="PDB" id="7ZQ9">
    <property type="method" value="EM"/>
    <property type="resolution" value="2.74 A"/>
    <property type="chains" value="J=1-40"/>
</dbReference>
<dbReference type="PDB" id="7ZQC">
    <property type="method" value="EM"/>
    <property type="resolution" value="2.31 A"/>
    <property type="chains" value="J=1-40"/>
</dbReference>
<dbReference type="PDB" id="7ZQD">
    <property type="method" value="EM"/>
    <property type="resolution" value="2.97 A"/>
    <property type="chains" value="J/J2=1-40"/>
</dbReference>
<dbReference type="PDB" id="8H2U">
    <property type="method" value="X-ray"/>
    <property type="resolution" value="3.40 A"/>
    <property type="chains" value="J=1-41"/>
</dbReference>
<dbReference type="PDBsum" id="6IJJ"/>
<dbReference type="PDBsum" id="6IJO"/>
<dbReference type="PDBsum" id="6JO5"/>
<dbReference type="PDBsum" id="6JO6"/>
<dbReference type="PDBsum" id="7BGI"/>
<dbReference type="PDBsum" id="7BLX"/>
<dbReference type="PDBsum" id="7D0J"/>
<dbReference type="PDBsum" id="7DZ7"/>
<dbReference type="PDBsum" id="7DZ8"/>
<dbReference type="PDBsum" id="7O01"/>
<dbReference type="PDBsum" id="7R3K"/>
<dbReference type="PDBsum" id="7WYI"/>
<dbReference type="PDBsum" id="7WZN"/>
<dbReference type="PDBsum" id="7ZQ9"/>
<dbReference type="PDBsum" id="7ZQC"/>
<dbReference type="PDBsum" id="7ZQD"/>
<dbReference type="PDBsum" id="8H2U"/>
<dbReference type="EMDB" id="EMD-12180"/>
<dbReference type="EMDB" id="EMD-12227"/>
<dbReference type="EMDB" id="EMD-12672"/>
<dbReference type="EMDB" id="EMD-14248"/>
<dbReference type="EMDB" id="EMD-14867"/>
<dbReference type="EMDB" id="EMD-14870"/>
<dbReference type="EMDB" id="EMD-14871"/>
<dbReference type="EMDB" id="EMD-30536"/>
<dbReference type="EMDB" id="EMD-30925"/>
<dbReference type="EMDB" id="EMD-30926"/>
<dbReference type="EMDB" id="EMD-32892"/>
<dbReference type="EMDB" id="EMD-32907"/>
<dbReference type="EMDB" id="EMD-9853"/>
<dbReference type="EMDB" id="EMD-9854"/>
<dbReference type="SMR" id="P59777"/>
<dbReference type="FunCoup" id="P59777">
    <property type="interactions" value="35"/>
</dbReference>
<dbReference type="IntAct" id="P59777">
    <property type="interactions" value="1"/>
</dbReference>
<dbReference type="STRING" id="3055.P59777"/>
<dbReference type="PaxDb" id="3055-DAA00961"/>
<dbReference type="GeneID" id="2716958"/>
<dbReference type="KEGG" id="cre:ChreCp061"/>
<dbReference type="eggNOG" id="ENOG502SEIN">
    <property type="taxonomic scope" value="Eukaryota"/>
</dbReference>
<dbReference type="HOGENOM" id="CLU_212133_1_1_1"/>
<dbReference type="InParanoid" id="P59777"/>
<dbReference type="BioCyc" id="CHLAMY:CHRECP061-MONOMER"/>
<dbReference type="BioCyc" id="MetaCyc:CHRECP061-MONOMER"/>
<dbReference type="Proteomes" id="UP000006906">
    <property type="component" value="Chloroplast"/>
</dbReference>
<dbReference type="GO" id="GO:0009535">
    <property type="term" value="C:chloroplast thylakoid membrane"/>
    <property type="evidence" value="ECO:0007669"/>
    <property type="project" value="UniProtKB-SubCell"/>
</dbReference>
<dbReference type="GO" id="GO:0009522">
    <property type="term" value="C:photosystem I"/>
    <property type="evidence" value="ECO:0007669"/>
    <property type="project" value="UniProtKB-KW"/>
</dbReference>
<dbReference type="GO" id="GO:0015979">
    <property type="term" value="P:photosynthesis"/>
    <property type="evidence" value="ECO:0007669"/>
    <property type="project" value="UniProtKB-UniRule"/>
</dbReference>
<dbReference type="Gene3D" id="1.20.5.510">
    <property type="entry name" value="Single helix bin"/>
    <property type="match status" value="1"/>
</dbReference>
<dbReference type="HAMAP" id="MF_00522">
    <property type="entry name" value="PSI_PsaJ"/>
    <property type="match status" value="1"/>
</dbReference>
<dbReference type="InterPro" id="IPR002615">
    <property type="entry name" value="PSI_PsaJ"/>
</dbReference>
<dbReference type="InterPro" id="IPR036062">
    <property type="entry name" value="PSI_PsaJ_sf"/>
</dbReference>
<dbReference type="PANTHER" id="PTHR36082">
    <property type="match status" value="1"/>
</dbReference>
<dbReference type="PANTHER" id="PTHR36082:SF2">
    <property type="entry name" value="PHOTOSYSTEM I REACTION CENTER SUBUNIT IX"/>
    <property type="match status" value="1"/>
</dbReference>
<dbReference type="Pfam" id="PF01701">
    <property type="entry name" value="PSI_PsaJ"/>
    <property type="match status" value="1"/>
</dbReference>
<dbReference type="SUPFAM" id="SSF81544">
    <property type="entry name" value="Subunit IX of photosystem I reaction centre, PsaJ"/>
    <property type="match status" value="1"/>
</dbReference>
<protein>
    <recommendedName>
        <fullName>Photosystem I reaction center subunit IX</fullName>
    </recommendedName>
    <alternativeName>
        <fullName>PSI-J</fullName>
    </alternativeName>
</protein>
<proteinExistence type="evidence at protein level"/>
<evidence type="ECO:0000250" key="1"/>
<evidence type="ECO:0000255" key="2"/>
<evidence type="ECO:0000305" key="3"/>
<evidence type="ECO:0007829" key="4">
    <source>
        <dbReference type="PDB" id="7R3K"/>
    </source>
</evidence>